<evidence type="ECO:0000256" key="1">
    <source>
        <dbReference type="SAM" id="MobiDB-lite"/>
    </source>
</evidence>
<evidence type="ECO:0000305" key="2"/>
<protein>
    <recommendedName>
        <fullName>Major viral transcription factor</fullName>
    </recommendedName>
    <alternativeName>
        <fullName>155 kDa immediate-early protein</fullName>
    </alternativeName>
</protein>
<gene>
    <name type="primary">IE</name>
    <name type="ordered locus">64</name>
</gene>
<sequence length="1487" mass="154869">MASQRSDFAPDLYDFIESNDFGEDPLIRAASAAEEGFTQPAAPDLLYGSQNMFGVDDAPLSTPAVVIPPPSPTPEPRGGKAKRSPSAAGSGGPPTPAAAAQPASPAPSPAPGLAAMLKMVHSSVAPGNGRRATGSSSPGGGDAADPVALDSDTETCPGSPQPEFPSSASPGGGSPAPRVRSISISSSSSSSSSMDEDDQADGAGASSSSSSSSDDSDSDEGGEEETPRPRHSQNAAKTPSAAGSPGPSSGGDRPAAGAATPKSCRSGAASPGAPAPAPASAPAPSRPGGGLLPPGARILEYLEGVREANLAKTLERPEPPAGMASPPGRSPHRLPKDQRPKSALAGASKRKRANPRPIPQTQTQAPAEEAPQTAVWDLLDMNSSQATGAAAAAASAPAAASCAPGVYQREPLLTPSGDPWPGSDPPPMGRVRYGGTGDSRDGLWDDPEIVLAASRYAEAQAPVPVFVPEMGDSTKQYNALVRMVFESREAMSWLQNSKLSGQDQNLAQFCQKFIHAPRGHGSFITGSVANPLPHIGDAMAAGNALWALPHAAASVAMSRRYDRTQKSFILQSLRRAYADMAYPRDEAGRPDSLAAVAGYPAQAAAAAASQQQPEAPAPSVRVREAYTRVCAALGPRRKAAAAAAAPGTRAPRPSAFRLRELGDACVLACQAVFEALLRLRGGASAVPGLDPSEIPSPACPPEALCSNPAGLETAALSLYELRDLVERARLLGDSDPTHRLGSDELRLAVRAVLVVARTVAPLVRYNAEGARARASAWTVTQAVFSIPSLVGGMLGEAVSLLAPPTRSQQPSSSSPGGEPFSGSAAAEGSLQTLPPLWPTVPGKQSATVPSSHSQSPQHSQSGGGAGATTATCCRATQTNARSRGQQHQPQKARSPQAAASPAHLSQEAMPGSSSDDRAIHGRPRGKSGKRRSEPLEPAAQAGASASFSSSARGYDPSGPVDSPPAPKRRVATPGHQAPRALGPMPAEGPDRRGGFRRVPRGDCHTPRPSDAACAAYCPPELVAELIDNQLFPEAWRPALTFDPQALATIAARCSGPPARDGARFGELAASGPLRRRAAWMHQIPDPEDVKVVVLYSPLQDEDLLGGLPASRPGGSRREPLWSDLKGGLSALLAALGNRILTKRSHAWAGNWTGAPDVSALNAQGVLLLSTGDLAFTGCVEYLCLRLGSARRKLLVLDAVSTEDWPQDGPAISQYHIYMRAALTPRVACAVRWPRERHLSRAVLTSSTLFGPGLFARAEAAFARLYPDSAPLRLCRSSNVAYTVDTRAGERTRVPLAPREYRQRVLPDYDGCKDMRAQAEGLGFHDPDFEEGAAQSHRAANRWGLGAWLRPVYLACGRRGAGAVEPSELLIPELLSEFCRVALLEPDAEAEPLVLPITEAPRRRAPRVDWEPGFGSRSTSVLHMGATELCLPEPDDELEIDGAGDVELVVEHPGPSPGVAQALRRAPIKIEVVSDDEDGGDWCNPYLS</sequence>
<name>ICP4_EHV1B</name>
<dbReference type="EMBL" id="AY665713">
    <property type="protein sequence ID" value="AAT67337.1"/>
    <property type="molecule type" value="Genomic_DNA"/>
</dbReference>
<dbReference type="EMBL" id="AY665713">
    <property type="protein sequence ID" value="AAT67321.1"/>
    <property type="molecule type" value="Genomic_DNA"/>
</dbReference>
<dbReference type="PIR" id="A36802">
    <property type="entry name" value="EDBEF6"/>
</dbReference>
<dbReference type="SMR" id="P28925"/>
<dbReference type="KEGG" id="vg:2948555"/>
<dbReference type="KEGG" id="vg:2948574"/>
<dbReference type="Proteomes" id="UP000001189">
    <property type="component" value="Segment"/>
</dbReference>
<dbReference type="GO" id="GO:0042025">
    <property type="term" value="C:host cell nucleus"/>
    <property type="evidence" value="ECO:0007669"/>
    <property type="project" value="UniProtKB-SubCell"/>
</dbReference>
<dbReference type="GO" id="GO:0003677">
    <property type="term" value="F:DNA binding"/>
    <property type="evidence" value="ECO:0007669"/>
    <property type="project" value="UniProtKB-KW"/>
</dbReference>
<dbReference type="GO" id="GO:0039695">
    <property type="term" value="P:DNA-templated viral transcription"/>
    <property type="evidence" value="ECO:0000250"/>
    <property type="project" value="UniProtKB"/>
</dbReference>
<dbReference type="GO" id="GO:0045893">
    <property type="term" value="P:positive regulation of DNA-templated transcription"/>
    <property type="evidence" value="ECO:0007669"/>
    <property type="project" value="InterPro"/>
</dbReference>
<dbReference type="InterPro" id="IPR005205">
    <property type="entry name" value="Herpes_ICP4_C"/>
</dbReference>
<dbReference type="InterPro" id="IPR005206">
    <property type="entry name" value="Herpes_ICP4_N"/>
</dbReference>
<dbReference type="PANTHER" id="PTHR48125">
    <property type="entry name" value="LP07818P1"/>
    <property type="match status" value="1"/>
</dbReference>
<dbReference type="PANTHER" id="PTHR48125:SF10">
    <property type="entry name" value="OS12G0136300 PROTEIN"/>
    <property type="match status" value="1"/>
</dbReference>
<dbReference type="Pfam" id="PF03585">
    <property type="entry name" value="Herpes_ICP4_C"/>
    <property type="match status" value="1"/>
</dbReference>
<dbReference type="Pfam" id="PF03584">
    <property type="entry name" value="Herpes_ICP4_N"/>
    <property type="match status" value="1"/>
</dbReference>
<accession>P28925</accession>
<accession>Q6DLD1</accession>
<keyword id="KW-0238">DNA-binding</keyword>
<keyword id="KW-0244">Early protein</keyword>
<keyword id="KW-1048">Host nucleus</keyword>
<keyword id="KW-0597">Phosphoprotein</keyword>
<keyword id="KW-1185">Reference proteome</keyword>
<keyword id="KW-0804">Transcription</keyword>
<keyword id="KW-0805">Transcription regulation</keyword>
<organism>
    <name type="scientific">Equine herpesvirus 1 (strain Ab4p)</name>
    <name type="common">EHV-1</name>
    <name type="synonym">Equine abortion virus</name>
    <dbReference type="NCBI Taxonomy" id="31520"/>
    <lineage>
        <taxon>Viruses</taxon>
        <taxon>Duplodnaviria</taxon>
        <taxon>Heunggongvirae</taxon>
        <taxon>Peploviricota</taxon>
        <taxon>Herviviricetes</taxon>
        <taxon>Herpesvirales</taxon>
        <taxon>Orthoherpesviridae</taxon>
        <taxon>Alphaherpesvirinae</taxon>
        <taxon>Varicellovirus</taxon>
        <taxon>Varicellovirus equidalpha1</taxon>
        <taxon>Equid alphaherpesvirus 1</taxon>
    </lineage>
</organism>
<feature type="chain" id="PRO_0000115816" description="Major viral transcription factor">
    <location>
        <begin position="1"/>
        <end position="1487"/>
    </location>
</feature>
<feature type="region of interest" description="Disordered" evidence="1">
    <location>
        <begin position="41"/>
        <end position="295"/>
    </location>
</feature>
<feature type="region of interest" description="Disordered" evidence="1">
    <location>
        <begin position="310"/>
        <end position="370"/>
    </location>
</feature>
<feature type="region of interest" description="Disordered" evidence="1">
    <location>
        <begin position="803"/>
        <end position="1007"/>
    </location>
</feature>
<feature type="compositionally biased region" description="Pro residues" evidence="1">
    <location>
        <begin position="66"/>
        <end position="75"/>
    </location>
</feature>
<feature type="compositionally biased region" description="Low complexity" evidence="1">
    <location>
        <begin position="165"/>
        <end position="193"/>
    </location>
</feature>
<feature type="compositionally biased region" description="Low complexity" evidence="1">
    <location>
        <begin position="201"/>
        <end position="213"/>
    </location>
</feature>
<feature type="compositionally biased region" description="Acidic residues" evidence="1">
    <location>
        <begin position="214"/>
        <end position="224"/>
    </location>
</feature>
<feature type="compositionally biased region" description="Low complexity" evidence="1">
    <location>
        <begin position="235"/>
        <end position="272"/>
    </location>
</feature>
<feature type="compositionally biased region" description="Pro residues" evidence="1">
    <location>
        <begin position="273"/>
        <end position="285"/>
    </location>
</feature>
<feature type="compositionally biased region" description="Low complexity" evidence="1">
    <location>
        <begin position="807"/>
        <end position="829"/>
    </location>
</feature>
<feature type="compositionally biased region" description="Low complexity" evidence="1">
    <location>
        <begin position="849"/>
        <end position="860"/>
    </location>
</feature>
<feature type="compositionally biased region" description="Low complexity" evidence="1">
    <location>
        <begin position="867"/>
        <end position="877"/>
    </location>
</feature>
<feature type="compositionally biased region" description="Polar residues" evidence="1">
    <location>
        <begin position="878"/>
        <end position="893"/>
    </location>
</feature>
<feature type="compositionally biased region" description="Basic residues" evidence="1">
    <location>
        <begin position="920"/>
        <end position="929"/>
    </location>
</feature>
<feature type="compositionally biased region" description="Low complexity" evidence="1">
    <location>
        <begin position="938"/>
        <end position="951"/>
    </location>
</feature>
<feature type="compositionally biased region" description="Basic and acidic residues" evidence="1">
    <location>
        <begin position="988"/>
        <end position="1007"/>
    </location>
</feature>
<reference key="1">
    <citation type="journal article" date="1992" name="Virology">
        <title>The DNA sequence of equine herpesvirus-1.</title>
        <authorList>
            <person name="Telford E.A.R."/>
            <person name="Watson M.S."/>
            <person name="McBride K."/>
            <person name="Davison A.J."/>
        </authorList>
    </citation>
    <scope>NUCLEOTIDE SEQUENCE [LARGE SCALE GENOMIC DNA]</scope>
</reference>
<proteinExistence type="inferred from homology"/>
<organismHost>
    <name type="scientific">Equus caballus</name>
    <name type="common">Horse</name>
    <dbReference type="NCBI Taxonomy" id="9796"/>
</organismHost>
<comment type="function">
    <text>This IE protein is a multifunctional protein capable of migrating to the nucleus, binding to DNA, trans-activating other viral genes, and autoregulating its own synthesis.</text>
</comment>
<comment type="subcellular location">
    <subcellularLocation>
        <location>Host nucleus</location>
    </subcellularLocation>
</comment>
<comment type="PTM">
    <text>A long stretch of serine residues may be a major site of phosphorylation.</text>
</comment>
<comment type="similarity">
    <text evidence="2">Belongs to the herpesviridae ICP4 family.</text>
</comment>